<proteinExistence type="evidence at protein level"/>
<reference key="1">
    <citation type="journal article" date="1992" name="J. Mol. Biol.">
        <title>Three different but related gene clusters encoding gas vesicles in halophilic archaea.</title>
        <authorList>
            <person name="Englert C."/>
            <person name="Krueger K."/>
            <person name="Offner S."/>
            <person name="Pfeifer F."/>
        </authorList>
    </citation>
    <scope>NUCLEOTIDE SEQUENCE [GENOMIC DNA]</scope>
    <scope>GAS VESICLE GENE CLUSTER</scope>
    <source>
        <strain>NRC-817</strain>
    </source>
</reference>
<reference evidence="12" key="2">
    <citation type="journal article" date="1996" name="J. Bacteriol.">
        <title>Transcript analysis of the c-vac region and differential synthesis of the two regulatory gas vesicle proteins GvpD and GvpE in Halobacterium salinarium PHH4.</title>
        <authorList>
            <person name="Krueger K."/>
            <person name="Pfeifer F."/>
        </authorList>
    </citation>
    <scope>NUCLEOTIDE SEQUENCE [GENOMIC DNA]</scope>
    <scope>INDUCTION</scope>
    <source>
        <strain>PHH1 /PHH4</strain>
    </source>
</reference>
<reference evidence="11" key="3">
    <citation type="journal article" date="2000" name="Proc. Natl. Acad. Sci. U.S.A.">
        <title>Genome sequence of Halobacterium species NRC-1.</title>
        <authorList>
            <person name="Ng W.V."/>
            <person name="Kennedy S.P."/>
            <person name="Mahairas G.G."/>
            <person name="Berquist B."/>
            <person name="Pan M."/>
            <person name="Shukla H.D."/>
            <person name="Lasky S.R."/>
            <person name="Baliga N.S."/>
            <person name="Thorsson V."/>
            <person name="Sbrogna J."/>
            <person name="Swartzell S."/>
            <person name="Weir D."/>
            <person name="Hall J."/>
            <person name="Dahl T.A."/>
            <person name="Welti R."/>
            <person name="Goo Y.A."/>
            <person name="Leithauser B."/>
            <person name="Keller K."/>
            <person name="Cruz R."/>
            <person name="Danson M.J."/>
            <person name="Hough D.W."/>
            <person name="Maddocks D.G."/>
            <person name="Jablonski P.E."/>
            <person name="Krebs M.P."/>
            <person name="Angevine C.M."/>
            <person name="Dale H."/>
            <person name="Isenbarger T.A."/>
            <person name="Peck R.F."/>
            <person name="Pohlschroder M."/>
            <person name="Spudich J.L."/>
            <person name="Jung K.-H."/>
            <person name="Alam M."/>
            <person name="Freitas T."/>
            <person name="Hou S."/>
            <person name="Daniels C.J."/>
            <person name="Dennis P.P."/>
            <person name="Omer A.D."/>
            <person name="Ebhardt H."/>
            <person name="Lowe T.M."/>
            <person name="Liang P."/>
            <person name="Riley M."/>
            <person name="Hood L."/>
            <person name="DasSarma S."/>
        </authorList>
    </citation>
    <scope>NUCLEOTIDE SEQUENCE [LARGE SCALE GENOMIC DNA]</scope>
    <source>
        <strain>ATCC 700922 / JCM 11081 / NRC-1</strain>
        <plasmid>pNRC200</plasmid>
    </source>
</reference>
<reference key="4">
    <citation type="journal article" date="2011" name="J. Proteome Res.">
        <title>New structural proteins of Halobacterium salinarum gas vesicle revealed by comparative proteomics analysis.</title>
        <authorList>
            <person name="Chu L.J."/>
            <person name="Chen M.C."/>
            <person name="Setter J."/>
            <person name="Tsai Y.S."/>
            <person name="Yang H."/>
            <person name="Fang X."/>
            <person name="Ting Y.S."/>
            <person name="Shaffer S.A."/>
            <person name="Taylor G.K."/>
            <person name="von Haller P.D."/>
            <person name="Goodlett D.R."/>
            <person name="Ng W.V."/>
        </authorList>
    </citation>
    <scope>PROTEIN SEQUENCE OF 173-189</scope>
    <scope>SUBCELLULAR LOCATION</scope>
    <scope>IDENTIFICATION BY MASS SPECTROMETRY</scope>
    <source>
        <strain>ATCC 700922 / JCM 11081 / NRC-1</strain>
    </source>
</reference>
<reference key="5">
    <citation type="journal article" date="1997" name="Microbiology">
        <title>Growth competition between Halobacterium salinarium strain PHH1 and mutants affected in gas vesicle synthesis.</title>
        <authorList>
            <person name="Beard S.J."/>
            <person name="Hayes P.K."/>
            <person name="Walsby A.E."/>
        </authorList>
    </citation>
    <scope>FUNCTION IN BUOYANCY</scope>
    <scope>POSSIBLE INDUCTION BY OXYGEN LIMITATION</scope>
    <source>
        <strain>PHH1</strain>
    </source>
</reference>
<reference key="6">
    <citation type="journal article" date="1998" name="Microbiology">
        <title>Structural characteristics of halobacterial gas vesicles.</title>
        <authorList>
            <person name="Offner S."/>
            <person name="Ziese U."/>
            <person name="Wanner G."/>
            <person name="Typke D."/>
            <person name="Pfeifer F."/>
        </authorList>
    </citation>
    <scope>FUNCTION</scope>
    <source>
        <strain>PHH1</strain>
    </source>
</reference>
<protein>
    <recommendedName>
        <fullName evidence="8">Gas vesicle protein F2</fullName>
        <shortName evidence="8">GvpF2</shortName>
    </recommendedName>
</protein>
<keyword id="KW-0963">Cytoplasm</keyword>
<keyword id="KW-0903">Direct protein sequencing</keyword>
<keyword id="KW-0304">Gas vesicle</keyword>
<keyword id="KW-0614">Plasmid</keyword>
<keyword id="KW-1185">Reference proteome</keyword>
<name>GVPF2_HALSA</name>
<accession>P33959</accession>
<accession>Q9HHT4</accession>
<geneLocation type="plasmid">
    <name>pNRC200</name>
</geneLocation>
<comment type="function">
    <text evidence="2 4">A minor component of the gas vesicle, may be involved in preventing GvpA aggregation during gas vesicle nucleation (By similarity). Gas vesicles are hollow, gas filled proteinaceous nanostructures found in several microbial planktonic microorganisms. They allow positioning of halobacteria at the optimal depth for growth in the poorly aerated, shallow brine pools of their habitat (PubMed:33711860).</text>
</comment>
<comment type="function">
    <text evidence="6">Expression of 2 c-vac DNA fragments containing 2 divergently transcribed regions (gvpE-gvpF-gvpG-gvpH-gvpI-gvpJ-gvpK-gvpL-gvpM and gvpA-gvpC-gvpN-gvpO) allows H.volcanii to produce gas vesicles. Note that gvpD is not necessary for gas vesicle formation.</text>
</comment>
<comment type="subunit">
    <text evidence="2">Binds GvpA.</text>
</comment>
<comment type="subcellular location">
    <subcellularLocation>
        <location evidence="2">Gas vesicle</location>
    </subcellularLocation>
    <subcellularLocation>
        <location evidence="10">Cytoplasm</location>
    </subcellularLocation>
    <text evidence="1">Probably faces the interior of the gas vesicle.</text>
</comment>
<comment type="induction">
    <text evidence="4 5">In PHH4 (a deletion of the p-vac locus) transcribed in all growth phases, maximal expression in mid-stationary phase. An unstable 6kb transcript able to cover gvpD-gvpE-gvpF-gvpG-gvpH-gvpI-gvpJ-gvpK-gvpL-gvpM is detected, as well as smaller transcripts (PubMed:8763925). Gas vesicles appear earlier when grown in static culture, possibly due to O(2)-limitation (PubMed:33711860).</text>
</comment>
<comment type="miscellaneous">
    <text evidence="3 5">Encoded in a 14-gene locus called c-vac which produces cylindrical gas vesicles only in the stationary growth phase.</text>
</comment>
<comment type="similarity">
    <text evidence="9">Belongs to the gas vesicle GvpF/GvpL family.</text>
</comment>
<dbReference type="EMBL" id="X64730">
    <property type="protein sequence ID" value="CAA45991.1"/>
    <property type="molecule type" value="Genomic_DNA"/>
</dbReference>
<dbReference type="EMBL" id="X94688">
    <property type="protein sequence ID" value="CAA64345.1"/>
    <property type="molecule type" value="Genomic_DNA"/>
</dbReference>
<dbReference type="EMBL" id="AE004438">
    <property type="protein sequence ID" value="AAG20892.1"/>
    <property type="molecule type" value="Genomic_DNA"/>
</dbReference>
<dbReference type="RefSeq" id="WP_010904105.1">
    <property type="nucleotide sequence ID" value="NZ_BK010831.1"/>
</dbReference>
<dbReference type="SMR" id="P33959"/>
<dbReference type="GeneID" id="68695196"/>
<dbReference type="KEGG" id="hal:VNG_6237G"/>
<dbReference type="PATRIC" id="fig|64091.14.peg.2240"/>
<dbReference type="HOGENOM" id="CLU_065736_2_0_2"/>
<dbReference type="InParanoid" id="P33959"/>
<dbReference type="OrthoDB" id="130966at2157"/>
<dbReference type="Proteomes" id="UP000000554">
    <property type="component" value="Plasmid pNRC200"/>
</dbReference>
<dbReference type="GO" id="GO:0005737">
    <property type="term" value="C:cytoplasm"/>
    <property type="evidence" value="ECO:0007669"/>
    <property type="project" value="UniProtKB-SubCell"/>
</dbReference>
<dbReference type="GO" id="GO:0031411">
    <property type="term" value="C:gas vesicle"/>
    <property type="evidence" value="ECO:0007669"/>
    <property type="project" value="UniProtKB-SubCell"/>
</dbReference>
<dbReference type="GO" id="GO:0031412">
    <property type="term" value="P:gas vesicle organization"/>
    <property type="evidence" value="ECO:0007669"/>
    <property type="project" value="InterPro"/>
</dbReference>
<dbReference type="InterPro" id="IPR009430">
    <property type="entry name" value="GvpL/GvpF"/>
</dbReference>
<dbReference type="PANTHER" id="PTHR36852">
    <property type="entry name" value="PROTEIN GVPL 2"/>
    <property type="match status" value="1"/>
</dbReference>
<dbReference type="PANTHER" id="PTHR36852:SF1">
    <property type="entry name" value="PROTEIN GVPL 2"/>
    <property type="match status" value="1"/>
</dbReference>
<dbReference type="Pfam" id="PF06386">
    <property type="entry name" value="GvpL_GvpF"/>
    <property type="match status" value="2"/>
</dbReference>
<feature type="chain" id="PRO_0000182682" description="Gas vesicle protein F2">
    <location>
        <begin position="1"/>
        <end position="217"/>
    </location>
</feature>
<gene>
    <name evidence="7 11" type="primary">gvpF2</name>
    <name evidence="7" type="synonym">c-gvpF</name>
    <name type="synonym">gvpF</name>
    <name evidence="11" type="ordered locus">VNG_6237G</name>
</gene>
<sequence length="217" mass="23398">MSESHLYTYGIIDDNESLALNVDGVAGATRAYTVSYRSLSAVVSDIETTDPERTDAAVEAHNTVLQAVLEHDATRAVVPMSFGMAFKNARTLKGVLRGARRALRSTLTEIAGTVELGVKVLAPGDDTAVDTAAVRSDVTARLSALSVGETENDCFTDRLIINKSYLVEHDTRDAFDAAIDEIDAAHDDLTVRYTGPWPPYNFVDIHIGAEQAQQGGR</sequence>
<organism>
    <name type="scientific">Halobacterium salinarum (strain ATCC 700922 / JCM 11081 / NRC-1)</name>
    <name type="common">Halobacterium halobium</name>
    <dbReference type="NCBI Taxonomy" id="64091"/>
    <lineage>
        <taxon>Archaea</taxon>
        <taxon>Methanobacteriati</taxon>
        <taxon>Methanobacteriota</taxon>
        <taxon>Stenosarchaea group</taxon>
        <taxon>Halobacteria</taxon>
        <taxon>Halobacteriales</taxon>
        <taxon>Halobacteriaceae</taxon>
        <taxon>Halobacterium</taxon>
        <taxon>Halobacterium salinarum NRC-34001</taxon>
    </lineage>
</organism>
<evidence type="ECO:0000250" key="1">
    <source>
        <dbReference type="UniProtKB" id="A8Y9T3"/>
    </source>
</evidence>
<evidence type="ECO:0000250" key="2">
    <source>
        <dbReference type="UniProtKB" id="Q9HI21"/>
    </source>
</evidence>
<evidence type="ECO:0000269" key="3">
    <source>
    </source>
</evidence>
<evidence type="ECO:0000269" key="4">
    <source>
    </source>
</evidence>
<evidence type="ECO:0000269" key="5">
    <source>
    </source>
</evidence>
<evidence type="ECO:0000269" key="6">
    <source>
    </source>
</evidence>
<evidence type="ECO:0000303" key="7">
    <source>
    </source>
</evidence>
<evidence type="ECO:0000303" key="8">
    <source>
    </source>
</evidence>
<evidence type="ECO:0000305" key="9"/>
<evidence type="ECO:0000305" key="10">
    <source>
    </source>
</evidence>
<evidence type="ECO:0000312" key="11">
    <source>
        <dbReference type="EMBL" id="AAG20892.1"/>
    </source>
</evidence>
<evidence type="ECO:0000312" key="12">
    <source>
        <dbReference type="EMBL" id="CAA64345.1"/>
    </source>
</evidence>